<comment type="function">
    <text evidence="2">Component of an amino-acid transport system.</text>
</comment>
<comment type="similarity">
    <text evidence="2">Belongs to the leucine-binding protein family.</text>
</comment>
<feature type="signal peptide" evidence="1">
    <location>
        <begin position="1"/>
        <end position="26"/>
    </location>
</feature>
<feature type="chain" id="PRO_0000285748" description="Leu/Ile/Val-binding protein homolog 8">
    <location>
        <begin position="27"/>
        <end position="403"/>
    </location>
</feature>
<protein>
    <recommendedName>
        <fullName>Leu/Ile/Val-binding protein homolog 8</fullName>
    </recommendedName>
</protein>
<evidence type="ECO:0000255" key="1"/>
<evidence type="ECO:0000305" key="2"/>
<dbReference type="EMBL" id="AE014292">
    <property type="protein sequence ID" value="AAN33590.1"/>
    <property type="molecule type" value="Genomic_DNA"/>
</dbReference>
<dbReference type="EMBL" id="CP002998">
    <property type="protein sequence ID" value="AEM19869.1"/>
    <property type="molecule type" value="Genomic_DNA"/>
</dbReference>
<dbReference type="RefSeq" id="WP_004688921.1">
    <property type="nucleotide sequence ID" value="NZ_KN046805.1"/>
</dbReference>
<dbReference type="SMR" id="Q8FWQ3"/>
<dbReference type="KEGG" id="bms:BRA0392"/>
<dbReference type="KEGG" id="bsi:BS1330_II0389"/>
<dbReference type="PATRIC" id="fig|204722.22.peg.3173"/>
<dbReference type="HOGENOM" id="CLU_027128_4_0_5"/>
<dbReference type="PhylomeDB" id="Q8FWQ3"/>
<dbReference type="Proteomes" id="UP000007104">
    <property type="component" value="Chromosome II"/>
</dbReference>
<dbReference type="GO" id="GO:0006865">
    <property type="term" value="P:amino acid transport"/>
    <property type="evidence" value="ECO:0007669"/>
    <property type="project" value="UniProtKB-KW"/>
</dbReference>
<dbReference type="CDD" id="cd06340">
    <property type="entry name" value="PBP1_ABC_ligand_binding-like"/>
    <property type="match status" value="1"/>
</dbReference>
<dbReference type="Gene3D" id="3.40.50.2300">
    <property type="match status" value="2"/>
</dbReference>
<dbReference type="InterPro" id="IPR051010">
    <property type="entry name" value="BCAA_transport"/>
</dbReference>
<dbReference type="InterPro" id="IPR028081">
    <property type="entry name" value="Leu-bd"/>
</dbReference>
<dbReference type="InterPro" id="IPR000709">
    <property type="entry name" value="Leu_Ile_Val-bd"/>
</dbReference>
<dbReference type="InterPro" id="IPR028082">
    <property type="entry name" value="Peripla_BP_I"/>
</dbReference>
<dbReference type="PANTHER" id="PTHR30483:SF37">
    <property type="entry name" value="ABC TRANSPORTER SUBSTRATE-BINDING PROTEIN"/>
    <property type="match status" value="1"/>
</dbReference>
<dbReference type="PANTHER" id="PTHR30483">
    <property type="entry name" value="LEUCINE-SPECIFIC-BINDING PROTEIN"/>
    <property type="match status" value="1"/>
</dbReference>
<dbReference type="Pfam" id="PF13458">
    <property type="entry name" value="Peripla_BP_6"/>
    <property type="match status" value="1"/>
</dbReference>
<dbReference type="PRINTS" id="PR00337">
    <property type="entry name" value="LEUILEVALBP"/>
</dbReference>
<dbReference type="SUPFAM" id="SSF53822">
    <property type="entry name" value="Periplasmic binding protein-like I"/>
    <property type="match status" value="1"/>
</dbReference>
<sequence length="403" mass="42429">MRLSRLLIGASLGVALSSTAFTAALADVKFGSLYPISGSLALLGEESARGLELAVDEVNAAGGIKGEKVVLERGDAVDNNQATGEARRLISLVGVKAIFGTYSSARVIAASQVSELAGIPYFEMGAVADEVTGRGLQYLFRTNPTAENMAKDSVDMLIKGIAPGLGKDPKDMKIGIIYEDSSYGTSVAGHQEDNAKAAGLTVVLKSGYPSNTVDMSSLVLELREKGADVVMQTSYQNDSVLFLQQANEAGYKPLAIIGGGGGYSMQPTADAVGHDLIDGVFDADYTQYAVNTSATPGLTEFVEAYKAKYGSQPRSGHSLTNYVGAKAIFQALNAGEGFEPDQIVSAVKALDIPDGQTAAGYGVKFGKNNQNERATMMGMQWQDGKLVTVYPENAAIAKMRFKK</sequence>
<gene>
    <name type="ordered locus">BRA0392</name>
    <name type="ordered locus">BS1330_II0389</name>
</gene>
<keyword id="KW-0029">Amino-acid transport</keyword>
<keyword id="KW-0732">Signal</keyword>
<keyword id="KW-0813">Transport</keyword>
<proteinExistence type="inferred from homology"/>
<accession>Q8FWQ3</accession>
<accession>G0KCD1</accession>
<name>LIVB8_BRUSU</name>
<organism>
    <name type="scientific">Brucella suis biovar 1 (strain 1330)</name>
    <dbReference type="NCBI Taxonomy" id="204722"/>
    <lineage>
        <taxon>Bacteria</taxon>
        <taxon>Pseudomonadati</taxon>
        <taxon>Pseudomonadota</taxon>
        <taxon>Alphaproteobacteria</taxon>
        <taxon>Hyphomicrobiales</taxon>
        <taxon>Brucellaceae</taxon>
        <taxon>Brucella/Ochrobactrum group</taxon>
        <taxon>Brucella</taxon>
    </lineage>
</organism>
<reference key="1">
    <citation type="journal article" date="2002" name="Proc. Natl. Acad. Sci. U.S.A.">
        <title>The Brucella suis genome reveals fundamental similarities between animal and plant pathogens and symbionts.</title>
        <authorList>
            <person name="Paulsen I.T."/>
            <person name="Seshadri R."/>
            <person name="Nelson K.E."/>
            <person name="Eisen J.A."/>
            <person name="Heidelberg J.F."/>
            <person name="Read T.D."/>
            <person name="Dodson R.J."/>
            <person name="Umayam L.A."/>
            <person name="Brinkac L.M."/>
            <person name="Beanan M.J."/>
            <person name="Daugherty S.C."/>
            <person name="DeBoy R.T."/>
            <person name="Durkin A.S."/>
            <person name="Kolonay J.F."/>
            <person name="Madupu R."/>
            <person name="Nelson W.C."/>
            <person name="Ayodeji B."/>
            <person name="Kraul M."/>
            <person name="Shetty J."/>
            <person name="Malek J.A."/>
            <person name="Van Aken S.E."/>
            <person name="Riedmuller S."/>
            <person name="Tettelin H."/>
            <person name="Gill S.R."/>
            <person name="White O."/>
            <person name="Salzberg S.L."/>
            <person name="Hoover D.L."/>
            <person name="Lindler L.E."/>
            <person name="Halling S.M."/>
            <person name="Boyle S.M."/>
            <person name="Fraser C.M."/>
        </authorList>
    </citation>
    <scope>NUCLEOTIDE SEQUENCE [LARGE SCALE GENOMIC DNA]</scope>
    <source>
        <strain>1330</strain>
    </source>
</reference>
<reference key="2">
    <citation type="journal article" date="2011" name="J. Bacteriol.">
        <title>Revised genome sequence of Brucella suis 1330.</title>
        <authorList>
            <person name="Tae H."/>
            <person name="Shallom S."/>
            <person name="Settlage R."/>
            <person name="Preston D."/>
            <person name="Adams L.G."/>
            <person name="Garner H.R."/>
        </authorList>
    </citation>
    <scope>NUCLEOTIDE SEQUENCE [LARGE SCALE GENOMIC DNA]</scope>
    <source>
        <strain>1330</strain>
    </source>
</reference>